<name>GCH1_XANE5</name>
<reference key="1">
    <citation type="journal article" date="2005" name="J. Bacteriol.">
        <title>Insights into genome plasticity and pathogenicity of the plant pathogenic Bacterium Xanthomonas campestris pv. vesicatoria revealed by the complete genome sequence.</title>
        <authorList>
            <person name="Thieme F."/>
            <person name="Koebnik R."/>
            <person name="Bekel T."/>
            <person name="Berger C."/>
            <person name="Boch J."/>
            <person name="Buettner D."/>
            <person name="Caldana C."/>
            <person name="Gaigalat L."/>
            <person name="Goesmann A."/>
            <person name="Kay S."/>
            <person name="Kirchner O."/>
            <person name="Lanz C."/>
            <person name="Linke B."/>
            <person name="McHardy A.C."/>
            <person name="Meyer F."/>
            <person name="Mittenhuber G."/>
            <person name="Nies D.H."/>
            <person name="Niesbach-Kloesgen U."/>
            <person name="Patschkowski T."/>
            <person name="Rueckert C."/>
            <person name="Rupp O."/>
            <person name="Schneiker S."/>
            <person name="Schuster S.C."/>
            <person name="Vorhoelter F.J."/>
            <person name="Weber E."/>
            <person name="Puehler A."/>
            <person name="Bonas U."/>
            <person name="Bartels D."/>
            <person name="Kaiser O."/>
        </authorList>
    </citation>
    <scope>NUCLEOTIDE SEQUENCE [LARGE SCALE GENOMIC DNA]</scope>
    <source>
        <strain>85-10</strain>
    </source>
</reference>
<proteinExistence type="inferred from homology"/>
<dbReference type="EC" id="3.5.4.16" evidence="2"/>
<dbReference type="EMBL" id="AM039952">
    <property type="protein sequence ID" value="CAJ26133.1"/>
    <property type="molecule type" value="Genomic_DNA"/>
</dbReference>
<dbReference type="RefSeq" id="WP_008574657.1">
    <property type="nucleotide sequence ID" value="NZ_CP017190.1"/>
</dbReference>
<dbReference type="SMR" id="Q3BM80"/>
<dbReference type="STRING" id="456327.BJD11_23380"/>
<dbReference type="GeneID" id="97512440"/>
<dbReference type="KEGG" id="xcv:XCV4402"/>
<dbReference type="eggNOG" id="COG0302">
    <property type="taxonomic scope" value="Bacteria"/>
</dbReference>
<dbReference type="HOGENOM" id="CLU_049768_3_1_6"/>
<dbReference type="UniPathway" id="UPA00848">
    <property type="reaction ID" value="UER00151"/>
</dbReference>
<dbReference type="Proteomes" id="UP000007069">
    <property type="component" value="Chromosome"/>
</dbReference>
<dbReference type="GO" id="GO:0005737">
    <property type="term" value="C:cytoplasm"/>
    <property type="evidence" value="ECO:0007669"/>
    <property type="project" value="TreeGrafter"/>
</dbReference>
<dbReference type="GO" id="GO:0005525">
    <property type="term" value="F:GTP binding"/>
    <property type="evidence" value="ECO:0007669"/>
    <property type="project" value="UniProtKB-KW"/>
</dbReference>
<dbReference type="GO" id="GO:0003934">
    <property type="term" value="F:GTP cyclohydrolase I activity"/>
    <property type="evidence" value="ECO:0007669"/>
    <property type="project" value="UniProtKB-UniRule"/>
</dbReference>
<dbReference type="GO" id="GO:0008270">
    <property type="term" value="F:zinc ion binding"/>
    <property type="evidence" value="ECO:0007669"/>
    <property type="project" value="UniProtKB-UniRule"/>
</dbReference>
<dbReference type="GO" id="GO:0006730">
    <property type="term" value="P:one-carbon metabolic process"/>
    <property type="evidence" value="ECO:0007669"/>
    <property type="project" value="UniProtKB-UniRule"/>
</dbReference>
<dbReference type="GO" id="GO:0006729">
    <property type="term" value="P:tetrahydrobiopterin biosynthetic process"/>
    <property type="evidence" value="ECO:0007669"/>
    <property type="project" value="TreeGrafter"/>
</dbReference>
<dbReference type="GO" id="GO:0046654">
    <property type="term" value="P:tetrahydrofolate biosynthetic process"/>
    <property type="evidence" value="ECO:0007669"/>
    <property type="project" value="UniProtKB-UniRule"/>
</dbReference>
<dbReference type="FunFam" id="1.10.286.10:FF:000001">
    <property type="entry name" value="GTP cyclohydrolase 1"/>
    <property type="match status" value="1"/>
</dbReference>
<dbReference type="FunFam" id="3.30.1130.10:FF:000001">
    <property type="entry name" value="GTP cyclohydrolase 1"/>
    <property type="match status" value="1"/>
</dbReference>
<dbReference type="Gene3D" id="1.10.286.10">
    <property type="match status" value="1"/>
</dbReference>
<dbReference type="Gene3D" id="3.30.1130.10">
    <property type="match status" value="1"/>
</dbReference>
<dbReference type="HAMAP" id="MF_00223">
    <property type="entry name" value="FolE"/>
    <property type="match status" value="1"/>
</dbReference>
<dbReference type="InterPro" id="IPR043133">
    <property type="entry name" value="GTP-CH-I_C/QueF"/>
</dbReference>
<dbReference type="InterPro" id="IPR043134">
    <property type="entry name" value="GTP-CH-I_N"/>
</dbReference>
<dbReference type="InterPro" id="IPR001474">
    <property type="entry name" value="GTP_CycHdrlase_I"/>
</dbReference>
<dbReference type="InterPro" id="IPR018234">
    <property type="entry name" value="GTP_CycHdrlase_I_CS"/>
</dbReference>
<dbReference type="InterPro" id="IPR020602">
    <property type="entry name" value="GTP_CycHdrlase_I_dom"/>
</dbReference>
<dbReference type="NCBIfam" id="TIGR00063">
    <property type="entry name" value="folE"/>
    <property type="match status" value="1"/>
</dbReference>
<dbReference type="NCBIfam" id="NF006825">
    <property type="entry name" value="PRK09347.1-2"/>
    <property type="match status" value="1"/>
</dbReference>
<dbReference type="NCBIfam" id="NF006826">
    <property type="entry name" value="PRK09347.1-3"/>
    <property type="match status" value="1"/>
</dbReference>
<dbReference type="PANTHER" id="PTHR11109:SF7">
    <property type="entry name" value="GTP CYCLOHYDROLASE 1"/>
    <property type="match status" value="1"/>
</dbReference>
<dbReference type="PANTHER" id="PTHR11109">
    <property type="entry name" value="GTP CYCLOHYDROLASE I"/>
    <property type="match status" value="1"/>
</dbReference>
<dbReference type="Pfam" id="PF01227">
    <property type="entry name" value="GTP_cyclohydroI"/>
    <property type="match status" value="1"/>
</dbReference>
<dbReference type="SUPFAM" id="SSF55620">
    <property type="entry name" value="Tetrahydrobiopterin biosynthesis enzymes-like"/>
    <property type="match status" value="1"/>
</dbReference>
<dbReference type="PROSITE" id="PS00859">
    <property type="entry name" value="GTP_CYCLOHYDROL_1_1"/>
    <property type="match status" value="1"/>
</dbReference>
<dbReference type="PROSITE" id="PS00860">
    <property type="entry name" value="GTP_CYCLOHYDROL_1_2"/>
    <property type="match status" value="1"/>
</dbReference>
<organism>
    <name type="scientific">Xanthomonas euvesicatoria pv. vesicatoria (strain 85-10)</name>
    <name type="common">Xanthomonas campestris pv. vesicatoria</name>
    <dbReference type="NCBI Taxonomy" id="316273"/>
    <lineage>
        <taxon>Bacteria</taxon>
        <taxon>Pseudomonadati</taxon>
        <taxon>Pseudomonadota</taxon>
        <taxon>Gammaproteobacteria</taxon>
        <taxon>Lysobacterales</taxon>
        <taxon>Lysobacteraceae</taxon>
        <taxon>Xanthomonas</taxon>
    </lineage>
</organism>
<feature type="chain" id="PRO_1000043758" description="GTP cyclohydrolase 1">
    <location>
        <begin position="1"/>
        <end position="200"/>
    </location>
</feature>
<feature type="binding site" evidence="2">
    <location>
        <position position="87"/>
    </location>
    <ligand>
        <name>Zn(2+)</name>
        <dbReference type="ChEBI" id="CHEBI:29105"/>
    </ligand>
</feature>
<feature type="binding site" evidence="2">
    <location>
        <position position="90"/>
    </location>
    <ligand>
        <name>Zn(2+)</name>
        <dbReference type="ChEBI" id="CHEBI:29105"/>
    </ligand>
</feature>
<feature type="binding site" evidence="2">
    <location>
        <position position="158"/>
    </location>
    <ligand>
        <name>Zn(2+)</name>
        <dbReference type="ChEBI" id="CHEBI:29105"/>
    </ligand>
</feature>
<accession>Q3BM80</accession>
<sequence length="200" mass="22644">MSQSNQPDSSVTQTQAEEAVRTLLRWAGEDPTREGLLDTPRRVAEAYGDWFSGYREEPREYLERTFEEVAGYDELIVLRDISYESHCEHHMAPIIGKVHVGYLPRGKVVGISKLARVVESYARRFQVQEKMTAQIAQCIQDVLQPLGVGVVVEGAHECMTTRGIHKRGVSMVTSKMLGTFREDARTRAEFLQFIEVGGKR</sequence>
<protein>
    <recommendedName>
        <fullName evidence="2">GTP cyclohydrolase 1</fullName>
        <ecNumber evidence="2">3.5.4.16</ecNumber>
    </recommendedName>
    <alternativeName>
        <fullName evidence="2">GTP cyclohydrolase I</fullName>
        <shortName evidence="2">GTP-CH-I</shortName>
    </alternativeName>
</protein>
<keyword id="KW-0342">GTP-binding</keyword>
<keyword id="KW-0378">Hydrolase</keyword>
<keyword id="KW-0479">Metal-binding</keyword>
<keyword id="KW-0547">Nucleotide-binding</keyword>
<keyword id="KW-0554">One-carbon metabolism</keyword>
<keyword id="KW-0862">Zinc</keyword>
<comment type="catalytic activity">
    <reaction evidence="2">
        <text>GTP + H2O = 7,8-dihydroneopterin 3'-triphosphate + formate + H(+)</text>
        <dbReference type="Rhea" id="RHEA:17473"/>
        <dbReference type="ChEBI" id="CHEBI:15377"/>
        <dbReference type="ChEBI" id="CHEBI:15378"/>
        <dbReference type="ChEBI" id="CHEBI:15740"/>
        <dbReference type="ChEBI" id="CHEBI:37565"/>
        <dbReference type="ChEBI" id="CHEBI:58462"/>
        <dbReference type="EC" id="3.5.4.16"/>
    </reaction>
</comment>
<comment type="pathway">
    <text evidence="2">Cofactor biosynthesis; 7,8-dihydroneopterin triphosphate biosynthesis; 7,8-dihydroneopterin triphosphate from GTP: step 1/1.</text>
</comment>
<comment type="subunit">
    <text evidence="1">Toroid-shaped homodecamer, composed of two pentamers of five dimers.</text>
</comment>
<comment type="similarity">
    <text evidence="2">Belongs to the GTP cyclohydrolase I family.</text>
</comment>
<evidence type="ECO:0000250" key="1"/>
<evidence type="ECO:0000255" key="2">
    <source>
        <dbReference type="HAMAP-Rule" id="MF_00223"/>
    </source>
</evidence>
<gene>
    <name evidence="2" type="primary">folE</name>
    <name type="ordered locus">XCV4402</name>
</gene>